<gene>
    <name type="ordered locus">YPN_2694</name>
    <name type="ORF">YP516_3040</name>
</gene>
<reference key="1">
    <citation type="journal article" date="2006" name="J. Bacteriol.">
        <title>Complete genome sequence of Yersinia pestis strains Antiqua and Nepal516: evidence of gene reduction in an emerging pathogen.</title>
        <authorList>
            <person name="Chain P.S.G."/>
            <person name="Hu P."/>
            <person name="Malfatti S.A."/>
            <person name="Radnedge L."/>
            <person name="Larimer F."/>
            <person name="Vergez L.M."/>
            <person name="Worsham P."/>
            <person name="Chu M.C."/>
            <person name="Andersen G.L."/>
        </authorList>
    </citation>
    <scope>NUCLEOTIDE SEQUENCE [LARGE SCALE GENOMIC DNA]</scope>
    <source>
        <strain>Nepal516</strain>
    </source>
</reference>
<reference key="2">
    <citation type="submission" date="2009-04" db="EMBL/GenBank/DDBJ databases">
        <title>Yersinia pestis Nepal516A whole genome shotgun sequencing project.</title>
        <authorList>
            <person name="Plunkett G. III"/>
            <person name="Anderson B.D."/>
            <person name="Baumler D.J."/>
            <person name="Burland V."/>
            <person name="Cabot E.L."/>
            <person name="Glasner J.D."/>
            <person name="Mau B."/>
            <person name="Neeno-Eckwall E."/>
            <person name="Perna N.T."/>
            <person name="Munk A.C."/>
            <person name="Tapia R."/>
            <person name="Green L.D."/>
            <person name="Rogers Y.C."/>
            <person name="Detter J.C."/>
            <person name="Bruce D.C."/>
            <person name="Brettin T.S."/>
        </authorList>
    </citation>
    <scope>NUCLEOTIDE SEQUENCE [LARGE SCALE GENOMIC DNA]</scope>
    <source>
        <strain>Nepal516</strain>
    </source>
</reference>
<protein>
    <recommendedName>
        <fullName evidence="1">Elongation factor P-like protein</fullName>
    </recommendedName>
</protein>
<organism>
    <name type="scientific">Yersinia pestis bv. Antiqua (strain Nepal516)</name>
    <dbReference type="NCBI Taxonomy" id="377628"/>
    <lineage>
        <taxon>Bacteria</taxon>
        <taxon>Pseudomonadati</taxon>
        <taxon>Pseudomonadota</taxon>
        <taxon>Gammaproteobacteria</taxon>
        <taxon>Enterobacterales</taxon>
        <taxon>Yersiniaceae</taxon>
        <taxon>Yersinia</taxon>
    </lineage>
</organism>
<dbReference type="EMBL" id="CP000305">
    <property type="protein sequence ID" value="ABG19022.1"/>
    <property type="molecule type" value="Genomic_DNA"/>
</dbReference>
<dbReference type="EMBL" id="ACNQ01000017">
    <property type="protein sequence ID" value="EEO75153.1"/>
    <property type="molecule type" value="Genomic_DNA"/>
</dbReference>
<dbReference type="SMR" id="Q1CG58"/>
<dbReference type="KEGG" id="ypn:YPN_2694"/>
<dbReference type="HOGENOM" id="CLU_074944_2_0_6"/>
<dbReference type="Proteomes" id="UP000008936">
    <property type="component" value="Chromosome"/>
</dbReference>
<dbReference type="GO" id="GO:0005737">
    <property type="term" value="C:cytoplasm"/>
    <property type="evidence" value="ECO:0007669"/>
    <property type="project" value="InterPro"/>
</dbReference>
<dbReference type="GO" id="GO:0003746">
    <property type="term" value="F:translation elongation factor activity"/>
    <property type="evidence" value="ECO:0007669"/>
    <property type="project" value="UniProtKB-UniRule"/>
</dbReference>
<dbReference type="GO" id="GO:0043043">
    <property type="term" value="P:peptide biosynthetic process"/>
    <property type="evidence" value="ECO:0007669"/>
    <property type="project" value="InterPro"/>
</dbReference>
<dbReference type="CDD" id="cd04470">
    <property type="entry name" value="S1_EF-P_repeat_1"/>
    <property type="match status" value="1"/>
</dbReference>
<dbReference type="CDD" id="cd05794">
    <property type="entry name" value="S1_EF-P_repeat_2"/>
    <property type="match status" value="1"/>
</dbReference>
<dbReference type="FunFam" id="2.40.50.140:FF:000004">
    <property type="entry name" value="Elongation factor P"/>
    <property type="match status" value="1"/>
</dbReference>
<dbReference type="FunFam" id="2.30.30.30:FF:000011">
    <property type="entry name" value="Elongation factor P-like protein"/>
    <property type="match status" value="1"/>
</dbReference>
<dbReference type="FunFam" id="2.40.50.140:FF:000053">
    <property type="entry name" value="Elongation factor P-like protein"/>
    <property type="match status" value="1"/>
</dbReference>
<dbReference type="Gene3D" id="2.30.30.30">
    <property type="match status" value="1"/>
</dbReference>
<dbReference type="Gene3D" id="2.40.50.140">
    <property type="entry name" value="Nucleic acid-binding proteins"/>
    <property type="match status" value="2"/>
</dbReference>
<dbReference type="HAMAP" id="MF_00646">
    <property type="entry name" value="EFP"/>
    <property type="match status" value="1"/>
</dbReference>
<dbReference type="InterPro" id="IPR015365">
    <property type="entry name" value="Elong-fact-P_C"/>
</dbReference>
<dbReference type="InterPro" id="IPR012340">
    <property type="entry name" value="NA-bd_OB-fold"/>
</dbReference>
<dbReference type="InterPro" id="IPR014722">
    <property type="entry name" value="Rib_uL2_dom2"/>
</dbReference>
<dbReference type="InterPro" id="IPR020599">
    <property type="entry name" value="Transl_elong_fac_P/YeiP"/>
</dbReference>
<dbReference type="InterPro" id="IPR013185">
    <property type="entry name" value="Transl_elong_KOW-like"/>
</dbReference>
<dbReference type="InterPro" id="IPR011897">
    <property type="entry name" value="Transl_elong_p-like_YeiP"/>
</dbReference>
<dbReference type="InterPro" id="IPR001059">
    <property type="entry name" value="Transl_elong_P/YeiP_cen"/>
</dbReference>
<dbReference type="InterPro" id="IPR013852">
    <property type="entry name" value="Transl_elong_P/YeiP_CS"/>
</dbReference>
<dbReference type="InterPro" id="IPR008991">
    <property type="entry name" value="Translation_prot_SH3-like_sf"/>
</dbReference>
<dbReference type="NCBIfam" id="NF001810">
    <property type="entry name" value="PRK00529.1"/>
    <property type="match status" value="1"/>
</dbReference>
<dbReference type="NCBIfam" id="NF003392">
    <property type="entry name" value="PRK04542.1"/>
    <property type="match status" value="1"/>
</dbReference>
<dbReference type="NCBIfam" id="TIGR02178">
    <property type="entry name" value="yeiP"/>
    <property type="match status" value="1"/>
</dbReference>
<dbReference type="PANTHER" id="PTHR30053">
    <property type="entry name" value="ELONGATION FACTOR P"/>
    <property type="match status" value="1"/>
</dbReference>
<dbReference type="PANTHER" id="PTHR30053:SF14">
    <property type="entry name" value="TRANSLATION ELONGATION FACTOR KOW-LIKE DOMAIN-CONTAINING PROTEIN"/>
    <property type="match status" value="1"/>
</dbReference>
<dbReference type="Pfam" id="PF01132">
    <property type="entry name" value="EFP"/>
    <property type="match status" value="1"/>
</dbReference>
<dbReference type="Pfam" id="PF08207">
    <property type="entry name" value="EFP_N"/>
    <property type="match status" value="1"/>
</dbReference>
<dbReference type="Pfam" id="PF09285">
    <property type="entry name" value="Elong-fact-P_C"/>
    <property type="match status" value="1"/>
</dbReference>
<dbReference type="PIRSF" id="PIRSF005901">
    <property type="entry name" value="EF-P"/>
    <property type="match status" value="1"/>
</dbReference>
<dbReference type="SMART" id="SM01185">
    <property type="entry name" value="EFP"/>
    <property type="match status" value="1"/>
</dbReference>
<dbReference type="SMART" id="SM00841">
    <property type="entry name" value="Elong-fact-P_C"/>
    <property type="match status" value="1"/>
</dbReference>
<dbReference type="SUPFAM" id="SSF50249">
    <property type="entry name" value="Nucleic acid-binding proteins"/>
    <property type="match status" value="2"/>
</dbReference>
<dbReference type="SUPFAM" id="SSF50104">
    <property type="entry name" value="Translation proteins SH3-like domain"/>
    <property type="match status" value="1"/>
</dbReference>
<dbReference type="PROSITE" id="PS01275">
    <property type="entry name" value="EFP"/>
    <property type="match status" value="1"/>
</dbReference>
<evidence type="ECO:0000255" key="1">
    <source>
        <dbReference type="HAMAP-Rule" id="MF_00646"/>
    </source>
</evidence>
<proteinExistence type="inferred from homology"/>
<name>EFPL_YERPN</name>
<comment type="similarity">
    <text evidence="1">Belongs to the elongation factor P family.</text>
</comment>
<feature type="chain" id="PRO_0000259907" description="Elongation factor P-like protein">
    <location>
        <begin position="1"/>
        <end position="190"/>
    </location>
</feature>
<accession>Q1CG58</accession>
<accession>C4GW53</accession>
<sequence length="190" mass="21271">MAKANEIKRGMAVNLNGKLLLVKDIDVQSPSARGASTLYKMRFSDVRTGLKVEERFKGDENLDTITLTRRAVNFSYIDGDEYVFMDDEDYTPYNFKKEQIEDELLFIPEGGMPGMQVLTMEGQLLALELPQTVDMEIVDTAPSIKGASASARNKPAIMSTGLSIQVPEYISPGEKIRIHIAERRYMGRAD</sequence>